<dbReference type="EMBL" id="CP000826">
    <property type="protein sequence ID" value="ABV43645.1"/>
    <property type="molecule type" value="Genomic_DNA"/>
</dbReference>
<dbReference type="SMR" id="A8GKK5"/>
<dbReference type="STRING" id="399741.Spro_4552"/>
<dbReference type="KEGG" id="spe:Spro_4552"/>
<dbReference type="eggNOG" id="COG2168">
    <property type="taxonomic scope" value="Bacteria"/>
</dbReference>
<dbReference type="HOGENOM" id="CLU_166087_2_1_6"/>
<dbReference type="OrthoDB" id="9795117at2"/>
<dbReference type="GO" id="GO:1990228">
    <property type="term" value="C:sulfurtransferase complex"/>
    <property type="evidence" value="ECO:0007669"/>
    <property type="project" value="TreeGrafter"/>
</dbReference>
<dbReference type="GO" id="GO:0002143">
    <property type="term" value="P:tRNA wobble position uridine thiolation"/>
    <property type="evidence" value="ECO:0007669"/>
    <property type="project" value="InterPro"/>
</dbReference>
<dbReference type="Gene3D" id="3.40.1260.10">
    <property type="entry name" value="DsrEFH-like"/>
    <property type="match status" value="1"/>
</dbReference>
<dbReference type="HAMAP" id="MF_01564">
    <property type="entry name" value="Thiourid_synth_B"/>
    <property type="match status" value="1"/>
</dbReference>
<dbReference type="InterPro" id="IPR027396">
    <property type="entry name" value="DsrEFH-like"/>
</dbReference>
<dbReference type="InterPro" id="IPR023526">
    <property type="entry name" value="Sulphur_relay_TusB"/>
</dbReference>
<dbReference type="InterPro" id="IPR007215">
    <property type="entry name" value="Sulphur_relay_TusB/DsrH"/>
</dbReference>
<dbReference type="NCBIfam" id="NF010035">
    <property type="entry name" value="PRK13510.1"/>
    <property type="match status" value="1"/>
</dbReference>
<dbReference type="NCBIfam" id="TIGR03011">
    <property type="entry name" value="sulf_tusB_dsrH"/>
    <property type="match status" value="1"/>
</dbReference>
<dbReference type="PANTHER" id="PTHR37526">
    <property type="entry name" value="PROTEIN TUSB"/>
    <property type="match status" value="1"/>
</dbReference>
<dbReference type="PANTHER" id="PTHR37526:SF1">
    <property type="entry name" value="PROTEIN TUSB"/>
    <property type="match status" value="1"/>
</dbReference>
<dbReference type="Pfam" id="PF04077">
    <property type="entry name" value="DsrH"/>
    <property type="match status" value="1"/>
</dbReference>
<dbReference type="SUPFAM" id="SSF75169">
    <property type="entry name" value="DsrEFH-like"/>
    <property type="match status" value="1"/>
</dbReference>
<reference key="1">
    <citation type="submission" date="2007-09" db="EMBL/GenBank/DDBJ databases">
        <title>Complete sequence of chromosome of Serratia proteamaculans 568.</title>
        <authorList>
            <consortium name="US DOE Joint Genome Institute"/>
            <person name="Copeland A."/>
            <person name="Lucas S."/>
            <person name="Lapidus A."/>
            <person name="Barry K."/>
            <person name="Glavina del Rio T."/>
            <person name="Dalin E."/>
            <person name="Tice H."/>
            <person name="Pitluck S."/>
            <person name="Chain P."/>
            <person name="Malfatti S."/>
            <person name="Shin M."/>
            <person name="Vergez L."/>
            <person name="Schmutz J."/>
            <person name="Larimer F."/>
            <person name="Land M."/>
            <person name="Hauser L."/>
            <person name="Kyrpides N."/>
            <person name="Kim E."/>
            <person name="Taghavi S."/>
            <person name="Newman L."/>
            <person name="Vangronsveld J."/>
            <person name="van der Lelie D."/>
            <person name="Richardson P."/>
        </authorList>
    </citation>
    <scope>NUCLEOTIDE SEQUENCE [LARGE SCALE GENOMIC DNA]</scope>
    <source>
        <strain>568</strain>
    </source>
</reference>
<comment type="function">
    <text evidence="1">Part of a sulfur-relay system required for 2-thiolation of 5-methylaminomethyl-2-thiouridine (mnm(5)s(2)U) at tRNA wobble positions.</text>
</comment>
<comment type="subunit">
    <text evidence="1">Heterohexamer, formed by a dimer of trimers. The hexameric TusBCD complex contains 2 copies each of TusB, TusC and TusD. The TusBCD complex interacts with TusE.</text>
</comment>
<comment type="subcellular location">
    <subcellularLocation>
        <location evidence="1">Cytoplasm</location>
    </subcellularLocation>
</comment>
<comment type="similarity">
    <text evidence="1">Belongs to the DsrH/TusB family.</text>
</comment>
<protein>
    <recommendedName>
        <fullName evidence="1">Protein TusB</fullName>
    </recommendedName>
    <alternativeName>
        <fullName evidence="1">tRNA 2-thiouridine synthesizing protein B</fullName>
    </alternativeName>
</protein>
<accession>A8GKK5</accession>
<name>TUSB_SERP5</name>
<organism>
    <name type="scientific">Serratia proteamaculans (strain 568)</name>
    <dbReference type="NCBI Taxonomy" id="399741"/>
    <lineage>
        <taxon>Bacteria</taxon>
        <taxon>Pseudomonadati</taxon>
        <taxon>Pseudomonadota</taxon>
        <taxon>Gammaproteobacteria</taxon>
        <taxon>Enterobacterales</taxon>
        <taxon>Yersiniaceae</taxon>
        <taxon>Serratia</taxon>
    </lineage>
</organism>
<feature type="chain" id="PRO_1000069060" description="Protein TusB">
    <location>
        <begin position="1"/>
        <end position="95"/>
    </location>
</feature>
<evidence type="ECO:0000255" key="1">
    <source>
        <dbReference type="HAMAP-Rule" id="MF_01564"/>
    </source>
</evidence>
<sequence length="95" mass="10428">MLYTLSRSPTQCDLPALLRLTAAGDDLLLLQDGVLAGLAGSAHLELLLNAPISLYALQDDLEARGLTGHFSHKITVIGYNHFVELTEKHRSQMSW</sequence>
<keyword id="KW-0963">Cytoplasm</keyword>
<keyword id="KW-0819">tRNA processing</keyword>
<proteinExistence type="inferred from homology"/>
<gene>
    <name evidence="1" type="primary">tusB</name>
    <name type="ordered locus">Spro_4552</name>
</gene>